<gene>
    <name evidence="8" type="primary">TRBV11-1</name>
</gene>
<feature type="signal peptide" evidence="1">
    <location>
        <begin position="1"/>
        <end position="21"/>
    </location>
</feature>
<feature type="chain" id="PRO_5014028876" description="T cell receptor beta variable 11-1" evidence="1">
    <location>
        <begin position="22"/>
        <end position="115"/>
    </location>
</feature>
<feature type="domain" description="Ig-like" evidence="2">
    <location>
        <begin position="22"/>
        <end position="115" status="greater than"/>
    </location>
</feature>
<feature type="disulfide bond" evidence="2">
    <location>
        <begin position="42"/>
        <end position="111"/>
    </location>
</feature>
<feature type="non-terminal residue">
    <location>
        <position position="115"/>
    </location>
</feature>
<protein>
    <recommendedName>
        <fullName evidence="8">T cell receptor beta variable 11-1</fullName>
    </recommendedName>
</protein>
<name>TVBK1_HUMAN</name>
<comment type="function">
    <text evidence="3 5 6 7">V region of the variable domain of T cell receptor (TR) beta chain that participates in the antigen recognition (PubMed:24600447). Alpha-beta T cell receptors are antigen specific receptors which are essential to the immune response and are present on the cell surface of T lymphocytes. Recognize peptide-major histocompatibility (MH) (pMH) complexes that are displayed by antigen presenting cells (APC), a prerequisite for efficient T cell adaptive immunity against pathogens (PubMed:25493333). Binding of alpha-beta TR to pMH complex initiates TR-CD3 clustering on the cell surface and intracellular activation of LCK that phosphorylates the ITAM motifs of CD3G, CD3D, CD3E and CD247 enabling the recruitment of ZAP70. In turn ZAP70 phosphorylates LAT, which recruits numerous signaling molecules to form the LAT signalosome. The LAT signalosome propagates signal branching to three major signaling pathways, the calcium, the mitogen-activated protein kinase (MAPK) kinase and the nuclear factor NF-kappa-B (NF-kB) pathways, leading to the mobilization of transcription factors that are critical for gene expression and essential for T cell growth and differentiation (PubMed:23524462). The T cell repertoire is generated in the thymus, by V-(D)-J rearrangement. This repertoire is then shaped by intrathymic selection events to generate a peripheral T cell pool of self-MH restricted, non-autoaggressive T cells. Post-thymic interaction of alpha-beta TR with the pMH complexes shapes TR structural and functional avidity (PubMed:15040585).</text>
</comment>
<comment type="subunit">
    <text evidence="4">Alpha-beta TR is a heterodimer composed of an alpha and beta chain; disulfide-linked. The alpha-beta TR is associated with the transmembrane signaling CD3 coreceptor proteins to form the TR-CD3 (TcR or TCR). The assembly of alpha-beta TR heterodimers with CD3 occurs in the endoplasmic reticulum where a single alpha-beta TR heterodimer associates with one CD3D-CD3E heterodimer, one CD3G-CD3E heterodimer and one CD247 homodimer forming a stable octameric structure. CD3D-CD3E and CD3G-CD3E heterodimers preferentially associate with TR alpha and TR beta chains, respectively. The association of the CD247 homodimer is the last step of TcR assembly in the endoplasmic reticulum and is required for transport to the cell surface.</text>
</comment>
<comment type="subcellular location">
    <subcellularLocation>
        <location evidence="4">Cell membrane</location>
    </subcellularLocation>
</comment>
<comment type="polymorphism">
    <text evidence="9">There are several alleles. The sequence shown is that of IMGT allele TRBV11-1*01.</text>
</comment>
<keyword id="KW-1064">Adaptive immunity</keyword>
<keyword id="KW-1003">Cell membrane</keyword>
<keyword id="KW-1015">Disulfide bond</keyword>
<keyword id="KW-0391">Immunity</keyword>
<keyword id="KW-0393">Immunoglobulin domain</keyword>
<keyword id="KW-0472">Membrane</keyword>
<keyword id="KW-0675">Receptor</keyword>
<keyword id="KW-1185">Reference proteome</keyword>
<keyword id="KW-0732">Signal</keyword>
<keyword id="KW-1279">T cell receptor</keyword>
<dbReference type="EMBL" id="AC244196">
    <property type="status" value="NOT_ANNOTATED_CDS"/>
    <property type="molecule type" value="Genomic_DNA"/>
</dbReference>
<dbReference type="SMR" id="A0A0K0K1C0"/>
<dbReference type="FunCoup" id="A0A0K0K1C0">
    <property type="interactions" value="381"/>
</dbReference>
<dbReference type="IMGT_GENE-DB" id="TRBV11-1"/>
<dbReference type="BioMuta" id="TRBV11-1"/>
<dbReference type="Ensembl" id="ENST00000390367.3">
    <property type="protein sequence ID" value="ENSP00000374890.3"/>
    <property type="gene ID" value="ENSG00000211720.3"/>
</dbReference>
<dbReference type="Ensembl" id="ENST00000634176.1">
    <property type="protein sequence ID" value="ENSP00000488521.1"/>
    <property type="gene ID" value="ENSG00000282711.1"/>
</dbReference>
<dbReference type="UCSC" id="uc033akx.2">
    <property type="organism name" value="human"/>
</dbReference>
<dbReference type="AGR" id="HGNC:12180"/>
<dbReference type="GeneCards" id="TRBV11-1"/>
<dbReference type="HGNC" id="HGNC:12180">
    <property type="gene designation" value="TRBV11-1"/>
</dbReference>
<dbReference type="HPA" id="ENSG00000211720">
    <property type="expression patterns" value="Tissue enriched (lymphoid)"/>
</dbReference>
<dbReference type="neXtProt" id="NX_A0A0K0K1C0"/>
<dbReference type="OpenTargets" id="ENSG00000211720"/>
<dbReference type="VEuPathDB" id="HostDB:ENSG00000211720"/>
<dbReference type="GeneTree" id="ENSGT00940000164371"/>
<dbReference type="InParanoid" id="A0A0K0K1C0"/>
<dbReference type="OMA" id="PVHKASW"/>
<dbReference type="OrthoDB" id="9631130at2759"/>
<dbReference type="PAN-GO" id="A0A0K0K1C0">
    <property type="GO annotations" value="2 GO annotations based on evolutionary models"/>
</dbReference>
<dbReference type="ChiTaRS" id="TRBV11-1">
    <property type="organism name" value="human"/>
</dbReference>
<dbReference type="Pharos" id="A0A0K0K1C0">
    <property type="development level" value="Tdark"/>
</dbReference>
<dbReference type="PRO" id="PR:A0A0K0K1C0"/>
<dbReference type="Proteomes" id="UP000005640">
    <property type="component" value="Chromosome 7"/>
</dbReference>
<dbReference type="RNAct" id="A0A0K0K1C0">
    <property type="molecule type" value="protein"/>
</dbReference>
<dbReference type="Bgee" id="ENSG00000211720">
    <property type="expression patterns" value="Expressed in granulocyte and 49 other cell types or tissues"/>
</dbReference>
<dbReference type="GO" id="GO:0005886">
    <property type="term" value="C:plasma membrane"/>
    <property type="evidence" value="ECO:0000318"/>
    <property type="project" value="GO_Central"/>
</dbReference>
<dbReference type="GO" id="GO:0042101">
    <property type="term" value="C:T cell receptor complex"/>
    <property type="evidence" value="ECO:0007669"/>
    <property type="project" value="UniProtKB-KW"/>
</dbReference>
<dbReference type="GO" id="GO:0002250">
    <property type="term" value="P:adaptive immune response"/>
    <property type="evidence" value="ECO:0007669"/>
    <property type="project" value="UniProtKB-KW"/>
</dbReference>
<dbReference type="GO" id="GO:0007166">
    <property type="term" value="P:cell surface receptor signaling pathway"/>
    <property type="evidence" value="ECO:0000318"/>
    <property type="project" value="GO_Central"/>
</dbReference>
<dbReference type="Gene3D" id="2.60.40.10">
    <property type="entry name" value="Immunoglobulins"/>
    <property type="match status" value="1"/>
</dbReference>
<dbReference type="InterPro" id="IPR007110">
    <property type="entry name" value="Ig-like_dom"/>
</dbReference>
<dbReference type="InterPro" id="IPR036179">
    <property type="entry name" value="Ig-like_dom_sf"/>
</dbReference>
<dbReference type="InterPro" id="IPR013783">
    <property type="entry name" value="Ig-like_fold"/>
</dbReference>
<dbReference type="InterPro" id="IPR013106">
    <property type="entry name" value="Ig_V-set"/>
</dbReference>
<dbReference type="InterPro" id="IPR050413">
    <property type="entry name" value="TCR_beta_variable"/>
</dbReference>
<dbReference type="PANTHER" id="PTHR23268:SF47">
    <property type="entry name" value="T CELL RECEPTOR BETA VARIABLE 11-1"/>
    <property type="match status" value="1"/>
</dbReference>
<dbReference type="PANTHER" id="PTHR23268">
    <property type="entry name" value="T-CELL RECEPTOR BETA CHAIN"/>
    <property type="match status" value="1"/>
</dbReference>
<dbReference type="Pfam" id="PF07686">
    <property type="entry name" value="V-set"/>
    <property type="match status" value="1"/>
</dbReference>
<dbReference type="SUPFAM" id="SSF48726">
    <property type="entry name" value="Immunoglobulin"/>
    <property type="match status" value="1"/>
</dbReference>
<dbReference type="PROSITE" id="PS50835">
    <property type="entry name" value="IG_LIKE"/>
    <property type="match status" value="1"/>
</dbReference>
<accession>A0A0K0K1C0</accession>
<accession>A0A075B6L9</accession>
<accession>A0A0A6YYP4</accession>
<accession>A0A582</accession>
<evidence type="ECO:0000255" key="1"/>
<evidence type="ECO:0000255" key="2">
    <source>
        <dbReference type="PROSITE-ProRule" id="PRU00114"/>
    </source>
</evidence>
<evidence type="ECO:0000303" key="3">
    <source>
    </source>
</evidence>
<evidence type="ECO:0000303" key="4">
    <source>
    </source>
</evidence>
<evidence type="ECO:0000303" key="5">
    <source>
    </source>
</evidence>
<evidence type="ECO:0000303" key="6">
    <source>
    </source>
</evidence>
<evidence type="ECO:0000303" key="7">
    <source>
    </source>
</evidence>
<evidence type="ECO:0000303" key="8">
    <source ref="2"/>
</evidence>
<evidence type="ECO:0000305" key="9"/>
<proteinExistence type="inferred from homology"/>
<sequence>MSTRLLCWMALCLLGAELSEAEVAQSPRYKITEKSQAVAFWCDPISGHATLYWYRQILGQGPELLVQFQDESVVDDSQLPKDRFSAERLKGVDSTLKIQPAELGDSAMYLCASSL</sequence>
<reference key="1">
    <citation type="journal article" date="2003" name="Nature">
        <title>The DNA sequence of human chromosome 7.</title>
        <authorList>
            <person name="Hillier L.W."/>
            <person name="Fulton R.S."/>
            <person name="Fulton L.A."/>
            <person name="Graves T.A."/>
            <person name="Pepin K.H."/>
            <person name="Wagner-McPherson C."/>
            <person name="Layman D."/>
            <person name="Maas J."/>
            <person name="Jaeger S."/>
            <person name="Walker R."/>
            <person name="Wylie K."/>
            <person name="Sekhon M."/>
            <person name="Becker M.C."/>
            <person name="O'Laughlin M.D."/>
            <person name="Schaller M.E."/>
            <person name="Fewell G.A."/>
            <person name="Delehaunty K.D."/>
            <person name="Miner T.L."/>
            <person name="Nash W.E."/>
            <person name="Cordes M."/>
            <person name="Du H."/>
            <person name="Sun H."/>
            <person name="Edwards J."/>
            <person name="Bradshaw-Cordum H."/>
            <person name="Ali J."/>
            <person name="Andrews S."/>
            <person name="Isak A."/>
            <person name="Vanbrunt A."/>
            <person name="Nguyen C."/>
            <person name="Du F."/>
            <person name="Lamar B."/>
            <person name="Courtney L."/>
            <person name="Kalicki J."/>
            <person name="Ozersky P."/>
            <person name="Bielicki L."/>
            <person name="Scott K."/>
            <person name="Holmes A."/>
            <person name="Harkins R."/>
            <person name="Harris A."/>
            <person name="Strong C.M."/>
            <person name="Hou S."/>
            <person name="Tomlinson C."/>
            <person name="Dauphin-Kohlberg S."/>
            <person name="Kozlowicz-Reilly A."/>
            <person name="Leonard S."/>
            <person name="Rohlfing T."/>
            <person name="Rock S.M."/>
            <person name="Tin-Wollam A.-M."/>
            <person name="Abbott A."/>
            <person name="Minx P."/>
            <person name="Maupin R."/>
            <person name="Strowmatt C."/>
            <person name="Latreille P."/>
            <person name="Miller N."/>
            <person name="Johnson D."/>
            <person name="Murray J."/>
            <person name="Woessner J.P."/>
            <person name="Wendl M.C."/>
            <person name="Yang S.-P."/>
            <person name="Schultz B.R."/>
            <person name="Wallis J.W."/>
            <person name="Spieth J."/>
            <person name="Bieri T.A."/>
            <person name="Nelson J.O."/>
            <person name="Berkowicz N."/>
            <person name="Wohldmann P.E."/>
            <person name="Cook L.L."/>
            <person name="Hickenbotham M.T."/>
            <person name="Eldred J."/>
            <person name="Williams D."/>
            <person name="Bedell J.A."/>
            <person name="Mardis E.R."/>
            <person name="Clifton S.W."/>
            <person name="Chissoe S.L."/>
            <person name="Marra M.A."/>
            <person name="Raymond C."/>
            <person name="Haugen E."/>
            <person name="Gillett W."/>
            <person name="Zhou Y."/>
            <person name="James R."/>
            <person name="Phelps K."/>
            <person name="Iadanoto S."/>
            <person name="Bubb K."/>
            <person name="Simms E."/>
            <person name="Levy R."/>
            <person name="Clendenning J."/>
            <person name="Kaul R."/>
            <person name="Kent W.J."/>
            <person name="Furey T.S."/>
            <person name="Baertsch R.A."/>
            <person name="Brent M.R."/>
            <person name="Keibler E."/>
            <person name="Flicek P."/>
            <person name="Bork P."/>
            <person name="Suyama M."/>
            <person name="Bailey J.A."/>
            <person name="Portnoy M.E."/>
            <person name="Torrents D."/>
            <person name="Chinwalla A.T."/>
            <person name="Gish W.R."/>
            <person name="Eddy S.R."/>
            <person name="McPherson J.D."/>
            <person name="Olson M.V."/>
            <person name="Eichler E.E."/>
            <person name="Green E.D."/>
            <person name="Waterston R.H."/>
            <person name="Wilson R.K."/>
        </authorList>
    </citation>
    <scope>NUCLEOTIDE SEQUENCE [LARGE SCALE GENOMIC DNA] (IMGT ALLELE TRBV11-1*01)</scope>
</reference>
<reference key="2">
    <citation type="book" date="2001" name="The T Cell Receptor FactsBook.">
        <title>The T Cell Receptor FactsBook.</title>
        <editorList>
            <person name="Lefranc M.P."/>
            <person name="Lefranc G."/>
        </editorList>
        <authorList>
            <person name="Lefranc M.P."/>
            <person name="Lefranc G."/>
        </authorList>
    </citation>
    <scope>NOMENCLATURE</scope>
</reference>
<reference key="3">
    <citation type="journal article" date="2004" name="Nat. Rev. Immunol.">
        <title>The many important facets of T-cell repertoire diversity.</title>
        <authorList>
            <person name="Nikolich-Zugich J."/>
            <person name="Slifka M.K."/>
            <person name="Messaoudi I."/>
        </authorList>
    </citation>
    <scope>REVIEW ON T CELL REPERTOIRE DIVERSITY</scope>
</reference>
<reference key="4">
    <citation type="journal article" date="2010" name="Cold Spring Harb. Perspect. Biol.">
        <title>Structural biology of the T-cell receptor: insights into receptor assembly, ligand recognition, and initiation of signaling.</title>
        <authorList>
            <person name="Wucherpfennig K.W."/>
            <person name="Gagnon E."/>
            <person name="Call M.J."/>
            <person name="Huseby E.S."/>
            <person name="Call M.E."/>
        </authorList>
    </citation>
    <scope>REVIEW ON T CELL RECEPTOR-CD3 COMPLEX ASSEMBLY</scope>
    <scope>SUBCELLULAR LOCATION</scope>
</reference>
<reference key="5">
    <citation type="journal article" date="2013" name="Nat. Rev. Immunol.">
        <title>T cell receptor signalling networks: branched, diversified and bounded.</title>
        <authorList>
            <person name="Brownlie R.J."/>
            <person name="Zamoyska R."/>
        </authorList>
    </citation>
    <scope>REVIEW ON T CELL RECEPTOR SIGNALING</scope>
</reference>
<reference key="6">
    <citation type="journal article" date="2014" name="Front. Immunol.">
        <title>Immunoglobulin and T Cell Receptor Genes: IMGT((R)) and the Birth and Rise of Immunoinformatics.</title>
        <authorList>
            <person name="Lefranc M.P."/>
        </authorList>
    </citation>
    <scope>NOMENCLATURE</scope>
</reference>
<reference key="7">
    <citation type="journal article" date="2015" name="Annu. Rev. Immunol.">
        <title>T cell antigen receptor recognition of antigen-presenting molecules.</title>
        <authorList>
            <person name="Rossjohn J."/>
            <person name="Gras S."/>
            <person name="Miles J.J."/>
            <person name="Turner S.J."/>
            <person name="Godfrey D.I."/>
            <person name="McCluskey J."/>
        </authorList>
    </citation>
    <scope>REVIEW ON FUNCTION</scope>
</reference>
<organism>
    <name type="scientific">Homo sapiens</name>
    <name type="common">Human</name>
    <dbReference type="NCBI Taxonomy" id="9606"/>
    <lineage>
        <taxon>Eukaryota</taxon>
        <taxon>Metazoa</taxon>
        <taxon>Chordata</taxon>
        <taxon>Craniata</taxon>
        <taxon>Vertebrata</taxon>
        <taxon>Euteleostomi</taxon>
        <taxon>Mammalia</taxon>
        <taxon>Eutheria</taxon>
        <taxon>Euarchontoglires</taxon>
        <taxon>Primates</taxon>
        <taxon>Haplorrhini</taxon>
        <taxon>Catarrhini</taxon>
        <taxon>Hominidae</taxon>
        <taxon>Homo</taxon>
    </lineage>
</organism>